<organism>
    <name type="scientific">Polaromonas naphthalenivorans (strain CJ2)</name>
    <dbReference type="NCBI Taxonomy" id="365044"/>
    <lineage>
        <taxon>Bacteria</taxon>
        <taxon>Pseudomonadati</taxon>
        <taxon>Pseudomonadota</taxon>
        <taxon>Betaproteobacteria</taxon>
        <taxon>Burkholderiales</taxon>
        <taxon>Comamonadaceae</taxon>
        <taxon>Polaromonas</taxon>
    </lineage>
</organism>
<feature type="chain" id="PRO_0000339570" description="ATP synthase subunit beta 2">
    <location>
        <begin position="1"/>
        <end position="474"/>
    </location>
</feature>
<feature type="binding site" evidence="1">
    <location>
        <begin position="157"/>
        <end position="164"/>
    </location>
    <ligand>
        <name>ATP</name>
        <dbReference type="ChEBI" id="CHEBI:30616"/>
    </ligand>
</feature>
<comment type="function">
    <text evidence="1">Produces ATP from ADP in the presence of a proton gradient across the membrane. The catalytic sites are hosted primarily by the beta subunits.</text>
</comment>
<comment type="catalytic activity">
    <reaction evidence="1">
        <text>ATP + H2O + 4 H(+)(in) = ADP + phosphate + 5 H(+)(out)</text>
        <dbReference type="Rhea" id="RHEA:57720"/>
        <dbReference type="ChEBI" id="CHEBI:15377"/>
        <dbReference type="ChEBI" id="CHEBI:15378"/>
        <dbReference type="ChEBI" id="CHEBI:30616"/>
        <dbReference type="ChEBI" id="CHEBI:43474"/>
        <dbReference type="ChEBI" id="CHEBI:456216"/>
        <dbReference type="EC" id="7.1.2.2"/>
    </reaction>
</comment>
<comment type="subunit">
    <text evidence="1">F-type ATPases have 2 components, CF(1) - the catalytic core - and CF(0) - the membrane proton channel. CF(1) has five subunits: alpha(3), beta(3), gamma(1), delta(1), epsilon(1). CF(0) has three main subunits: a(1), b(2) and c(9-12). The alpha and beta chains form an alternating ring which encloses part of the gamma chain. CF(1) is attached to CF(0) by a central stalk formed by the gamma and epsilon chains, while a peripheral stalk is formed by the delta and b chains.</text>
</comment>
<comment type="subcellular location">
    <subcellularLocation>
        <location evidence="1">Cell inner membrane</location>
        <topology evidence="1">Peripheral membrane protein</topology>
    </subcellularLocation>
</comment>
<comment type="similarity">
    <text evidence="1">Belongs to the ATPase alpha/beta chains family.</text>
</comment>
<sequence length="474" mass="51810">MTDGGLQADAPHLGVVVSVRGSVVDVRFDTHLPPIHTVLHADEGRIIVEVLAQRDAHHVRAIALTPTQGLARGMPVVDTGGPLKAPVGKGILSRMFDVFGNTIDRLPAPPDIQWRSVHRAPPALARRSTRSEVFVTGIKVIDVLLPLERGGKAGLFGGAGVGKTVLLTEMIHNMVGHQEGISIFCGIGERCREGEELYRDMKDAGVLPSMVMVFGQMNEPPGSRFRVGHAALTMAEYFRDDEHRDVLLLIDNIFRFIQAGSEVSGLMGQMPSRLGYQPTMGTELSGLEERIANTDSGAITSIQAVYVPADDFTDPAAVHTFSHLSASIVLSRKRASEGLFPAIDPLQSSSKMATPGIVGERHYALAQEIRRTLAQYAQLKDIIAMLGLEQLSPQDRNVVGRARRLERFLTQPFFTTEQFTNLPGKLVSLEDALDGCERILRDEFKDCPESALYMIGKIDEARARKTEAIDVHES</sequence>
<reference key="1">
    <citation type="journal article" date="2009" name="Environ. Microbiol.">
        <title>The genome of Polaromonas naphthalenivorans strain CJ2, isolated from coal tar-contaminated sediment, reveals physiological and metabolic versatility and evolution through extensive horizontal gene transfer.</title>
        <authorList>
            <person name="Yagi J.M."/>
            <person name="Sims D."/>
            <person name="Brettin T."/>
            <person name="Bruce D."/>
            <person name="Madsen E.L."/>
        </authorList>
    </citation>
    <scope>NUCLEOTIDE SEQUENCE [LARGE SCALE GENOMIC DNA]</scope>
    <source>
        <strain>CJ2</strain>
    </source>
</reference>
<accession>A1VPR5</accession>
<gene>
    <name evidence="1" type="primary">atpD2</name>
    <name type="ordered locus">Pnap_2336</name>
</gene>
<name>ATPB2_POLNA</name>
<dbReference type="EC" id="7.1.2.2" evidence="1"/>
<dbReference type="EMBL" id="CP000529">
    <property type="protein sequence ID" value="ABM37643.1"/>
    <property type="molecule type" value="Genomic_DNA"/>
</dbReference>
<dbReference type="RefSeq" id="WP_011801721.1">
    <property type="nucleotide sequence ID" value="NC_008781.1"/>
</dbReference>
<dbReference type="SMR" id="A1VPR5"/>
<dbReference type="STRING" id="365044.Pnap_2336"/>
<dbReference type="KEGG" id="pna:Pnap_2336"/>
<dbReference type="eggNOG" id="COG0055">
    <property type="taxonomic scope" value="Bacteria"/>
</dbReference>
<dbReference type="HOGENOM" id="CLU_022398_0_2_4"/>
<dbReference type="OrthoDB" id="9801639at2"/>
<dbReference type="Proteomes" id="UP000000644">
    <property type="component" value="Chromosome"/>
</dbReference>
<dbReference type="GO" id="GO:0005886">
    <property type="term" value="C:plasma membrane"/>
    <property type="evidence" value="ECO:0007669"/>
    <property type="project" value="UniProtKB-SubCell"/>
</dbReference>
<dbReference type="GO" id="GO:0045259">
    <property type="term" value="C:proton-transporting ATP synthase complex"/>
    <property type="evidence" value="ECO:0007669"/>
    <property type="project" value="UniProtKB-KW"/>
</dbReference>
<dbReference type="GO" id="GO:0005524">
    <property type="term" value="F:ATP binding"/>
    <property type="evidence" value="ECO:0007669"/>
    <property type="project" value="UniProtKB-UniRule"/>
</dbReference>
<dbReference type="GO" id="GO:0016887">
    <property type="term" value="F:ATP hydrolysis activity"/>
    <property type="evidence" value="ECO:0007669"/>
    <property type="project" value="InterPro"/>
</dbReference>
<dbReference type="GO" id="GO:0046933">
    <property type="term" value="F:proton-transporting ATP synthase activity, rotational mechanism"/>
    <property type="evidence" value="ECO:0007669"/>
    <property type="project" value="UniProtKB-UniRule"/>
</dbReference>
<dbReference type="GO" id="GO:0046961">
    <property type="term" value="F:proton-transporting ATPase activity, rotational mechanism"/>
    <property type="evidence" value="ECO:0007669"/>
    <property type="project" value="InterPro"/>
</dbReference>
<dbReference type="CDD" id="cd18110">
    <property type="entry name" value="ATP-synt_F1_beta_C"/>
    <property type="match status" value="1"/>
</dbReference>
<dbReference type="CDD" id="cd01133">
    <property type="entry name" value="F1-ATPase_beta_CD"/>
    <property type="match status" value="1"/>
</dbReference>
<dbReference type="FunFam" id="1.10.1140.10:FF:000006">
    <property type="entry name" value="ATP synthase subunit beta"/>
    <property type="match status" value="1"/>
</dbReference>
<dbReference type="FunFam" id="3.40.50.300:FF:001630">
    <property type="entry name" value="ATP synthase subunit beta"/>
    <property type="match status" value="1"/>
</dbReference>
<dbReference type="Gene3D" id="2.40.10.170">
    <property type="match status" value="1"/>
</dbReference>
<dbReference type="Gene3D" id="1.10.1140.10">
    <property type="entry name" value="Bovine Mitochondrial F1-atpase, Atp Synthase Beta Chain, Chain D, domain 3"/>
    <property type="match status" value="1"/>
</dbReference>
<dbReference type="Gene3D" id="3.40.50.300">
    <property type="entry name" value="P-loop containing nucleotide triphosphate hydrolases"/>
    <property type="match status" value="1"/>
</dbReference>
<dbReference type="HAMAP" id="MF_01347">
    <property type="entry name" value="ATP_synth_beta_bact"/>
    <property type="match status" value="1"/>
</dbReference>
<dbReference type="InterPro" id="IPR003593">
    <property type="entry name" value="AAA+_ATPase"/>
</dbReference>
<dbReference type="InterPro" id="IPR017691">
    <property type="entry name" value="Alt_ATPase_F1_bsu"/>
</dbReference>
<dbReference type="InterPro" id="IPR055190">
    <property type="entry name" value="ATP-synt_VA_C"/>
</dbReference>
<dbReference type="InterPro" id="IPR005722">
    <property type="entry name" value="ATP_synth_F1_bsu"/>
</dbReference>
<dbReference type="InterPro" id="IPR020003">
    <property type="entry name" value="ATPase_a/bsu_AS"/>
</dbReference>
<dbReference type="InterPro" id="IPR050053">
    <property type="entry name" value="ATPase_alpha/beta_chains"/>
</dbReference>
<dbReference type="InterPro" id="IPR004100">
    <property type="entry name" value="ATPase_F1/V1/A1_a/bsu_N"/>
</dbReference>
<dbReference type="InterPro" id="IPR036121">
    <property type="entry name" value="ATPase_F1/V1/A1_a/bsu_N_sf"/>
</dbReference>
<dbReference type="InterPro" id="IPR000194">
    <property type="entry name" value="ATPase_F1/V1/A1_a/bsu_nucl-bd"/>
</dbReference>
<dbReference type="InterPro" id="IPR024034">
    <property type="entry name" value="ATPase_F1/V1_b/a_C"/>
</dbReference>
<dbReference type="InterPro" id="IPR027417">
    <property type="entry name" value="P-loop_NTPase"/>
</dbReference>
<dbReference type="NCBIfam" id="TIGR03305">
    <property type="entry name" value="alt_F1F0_F1_bet"/>
    <property type="match status" value="1"/>
</dbReference>
<dbReference type="NCBIfam" id="TIGR01039">
    <property type="entry name" value="atpD"/>
    <property type="match status" value="1"/>
</dbReference>
<dbReference type="PANTHER" id="PTHR15184">
    <property type="entry name" value="ATP SYNTHASE"/>
    <property type="match status" value="1"/>
</dbReference>
<dbReference type="PANTHER" id="PTHR15184:SF71">
    <property type="entry name" value="ATP SYNTHASE SUBUNIT BETA, MITOCHONDRIAL"/>
    <property type="match status" value="1"/>
</dbReference>
<dbReference type="Pfam" id="PF00006">
    <property type="entry name" value="ATP-synt_ab"/>
    <property type="match status" value="1"/>
</dbReference>
<dbReference type="Pfam" id="PF02874">
    <property type="entry name" value="ATP-synt_ab_N"/>
    <property type="match status" value="1"/>
</dbReference>
<dbReference type="Pfam" id="PF22919">
    <property type="entry name" value="ATP-synt_VA_C"/>
    <property type="match status" value="1"/>
</dbReference>
<dbReference type="SMART" id="SM00382">
    <property type="entry name" value="AAA"/>
    <property type="match status" value="1"/>
</dbReference>
<dbReference type="SUPFAM" id="SSF47917">
    <property type="entry name" value="C-terminal domain of alpha and beta subunits of F1 ATP synthase"/>
    <property type="match status" value="1"/>
</dbReference>
<dbReference type="SUPFAM" id="SSF50615">
    <property type="entry name" value="N-terminal domain of alpha and beta subunits of F1 ATP synthase"/>
    <property type="match status" value="1"/>
</dbReference>
<dbReference type="SUPFAM" id="SSF52540">
    <property type="entry name" value="P-loop containing nucleoside triphosphate hydrolases"/>
    <property type="match status" value="1"/>
</dbReference>
<dbReference type="PROSITE" id="PS00152">
    <property type="entry name" value="ATPASE_ALPHA_BETA"/>
    <property type="match status" value="1"/>
</dbReference>
<evidence type="ECO:0000255" key="1">
    <source>
        <dbReference type="HAMAP-Rule" id="MF_01347"/>
    </source>
</evidence>
<proteinExistence type="inferred from homology"/>
<keyword id="KW-0066">ATP synthesis</keyword>
<keyword id="KW-0067">ATP-binding</keyword>
<keyword id="KW-0997">Cell inner membrane</keyword>
<keyword id="KW-1003">Cell membrane</keyword>
<keyword id="KW-0139">CF(1)</keyword>
<keyword id="KW-0375">Hydrogen ion transport</keyword>
<keyword id="KW-0406">Ion transport</keyword>
<keyword id="KW-0472">Membrane</keyword>
<keyword id="KW-0547">Nucleotide-binding</keyword>
<keyword id="KW-1185">Reference proteome</keyword>
<keyword id="KW-1278">Translocase</keyword>
<keyword id="KW-0813">Transport</keyword>
<protein>
    <recommendedName>
        <fullName evidence="1">ATP synthase subunit beta 2</fullName>
        <ecNumber evidence="1">7.1.2.2</ecNumber>
    </recommendedName>
    <alternativeName>
        <fullName evidence="1">ATP synthase F1 sector subunit beta 2</fullName>
    </alternativeName>
    <alternativeName>
        <fullName evidence="1">F-ATPase subunit beta 2</fullName>
    </alternativeName>
</protein>